<keyword id="KW-0002">3D-structure</keyword>
<keyword id="KW-0010">Activator</keyword>
<keyword id="KW-0238">DNA-binding</keyword>
<keyword id="KW-0936">Ethylene signaling pathway</keyword>
<keyword id="KW-0539">Nucleus</keyword>
<keyword id="KW-0611">Plant defense</keyword>
<keyword id="KW-1185">Reference proteome</keyword>
<keyword id="KW-0804">Transcription</keyword>
<keyword id="KW-0805">Transcription regulation</keyword>
<sequence>MSMTADSQSDYAFLESIRRHLLGESEPILSESTASSVTQSCVTGQSIKPVYGRNPSFSKLYPCFTESWGDLPLKENDSEDMLVYGILNDAFHGGWEPSSSSSDEDRSSFPSVKIETPESFAAVDSVPVKKEKTSPVSAAVTAAKGKHYRGVRQRPWGKFAAEIRDPAKNGARVWLGTFETAEDAALAYDRAAFRMRGSRALLNFPLRVNSGEPDPVRIKSKRSSFSSSNENGAPKKRRTVAAGGGMDKGLTVKCEVVEVARGDRLLVL</sequence>
<dbReference type="EMBL" id="Z97343">
    <property type="protein sequence ID" value="CAB45963.1"/>
    <property type="status" value="ALT_FRAME"/>
    <property type="molecule type" value="Genomic_DNA"/>
</dbReference>
<dbReference type="EMBL" id="AL161546">
    <property type="protein sequence ID" value="CAB78753.1"/>
    <property type="status" value="ALT_FRAME"/>
    <property type="molecule type" value="Genomic_DNA"/>
</dbReference>
<dbReference type="EMBL" id="CP002687">
    <property type="protein sequence ID" value="AEE83903.1"/>
    <property type="molecule type" value="Genomic_DNA"/>
</dbReference>
<dbReference type="EMBL" id="AY058174">
    <property type="protein sequence ID" value="AAL25588.1"/>
    <property type="molecule type" value="mRNA"/>
</dbReference>
<dbReference type="EMBL" id="AY062533">
    <property type="protein sequence ID" value="AAL32611.1"/>
    <property type="molecule type" value="mRNA"/>
</dbReference>
<dbReference type="EMBL" id="BT002578">
    <property type="protein sequence ID" value="AAO00938.1"/>
    <property type="molecule type" value="mRNA"/>
</dbReference>
<dbReference type="EMBL" id="AB008103">
    <property type="protein sequence ID" value="BAA32418.1"/>
    <property type="status" value="ALT_INIT"/>
    <property type="molecule type" value="mRNA"/>
</dbReference>
<dbReference type="PIR" id="A85196">
    <property type="entry name" value="A85196"/>
</dbReference>
<dbReference type="PIR" id="T51988">
    <property type="entry name" value="T51988"/>
</dbReference>
<dbReference type="RefSeq" id="NP_567530.4">
    <property type="nucleotide sequence ID" value="NM_117855.6"/>
</dbReference>
<dbReference type="PDB" id="1GCC">
    <property type="method" value="NMR"/>
    <property type="chains" value="A=146-208"/>
</dbReference>
<dbReference type="PDB" id="2GCC">
    <property type="method" value="NMR"/>
    <property type="chains" value="A=143-212"/>
</dbReference>
<dbReference type="PDB" id="3GCC">
    <property type="method" value="NMR"/>
    <property type="chains" value="A=143-212"/>
</dbReference>
<dbReference type="PDBsum" id="1GCC"/>
<dbReference type="PDBsum" id="2GCC"/>
<dbReference type="PDBsum" id="3GCC"/>
<dbReference type="SMR" id="O80337"/>
<dbReference type="BioGRID" id="12757">
    <property type="interactions" value="2"/>
</dbReference>
<dbReference type="FunCoup" id="O80337">
    <property type="interactions" value="314"/>
</dbReference>
<dbReference type="IntAct" id="O80337">
    <property type="interactions" value="2"/>
</dbReference>
<dbReference type="STRING" id="3702.O80337"/>
<dbReference type="PaxDb" id="3702-AT4G17500.1"/>
<dbReference type="ProteomicsDB" id="222067"/>
<dbReference type="EnsemblPlants" id="AT4G17500.1">
    <property type="protein sequence ID" value="AT4G17500.1"/>
    <property type="gene ID" value="AT4G17500"/>
</dbReference>
<dbReference type="GeneID" id="827464"/>
<dbReference type="Gramene" id="AT4G17500.1">
    <property type="protein sequence ID" value="AT4G17500.1"/>
    <property type="gene ID" value="AT4G17500"/>
</dbReference>
<dbReference type="KEGG" id="ath:AT4G17500"/>
<dbReference type="Araport" id="AT4G17500"/>
<dbReference type="TAIR" id="AT4G17500">
    <property type="gene designation" value="ERF-1"/>
</dbReference>
<dbReference type="eggNOG" id="ENOG502QRIC">
    <property type="taxonomic scope" value="Eukaryota"/>
</dbReference>
<dbReference type="HOGENOM" id="CLU_058713_3_0_1"/>
<dbReference type="InParanoid" id="O80337"/>
<dbReference type="OMA" id="WGELPLQ"/>
<dbReference type="PhylomeDB" id="O80337"/>
<dbReference type="EvolutionaryTrace" id="O80337"/>
<dbReference type="PRO" id="PR:O80337"/>
<dbReference type="Proteomes" id="UP000006548">
    <property type="component" value="Chromosome 4"/>
</dbReference>
<dbReference type="ExpressionAtlas" id="O80337">
    <property type="expression patterns" value="baseline and differential"/>
</dbReference>
<dbReference type="GO" id="GO:0005634">
    <property type="term" value="C:nucleus"/>
    <property type="evidence" value="ECO:0007669"/>
    <property type="project" value="UniProtKB-SubCell"/>
</dbReference>
<dbReference type="GO" id="GO:0003700">
    <property type="term" value="F:DNA-binding transcription factor activity"/>
    <property type="evidence" value="ECO:0000250"/>
    <property type="project" value="TAIR"/>
</dbReference>
<dbReference type="GO" id="GO:0000976">
    <property type="term" value="F:transcription cis-regulatory region binding"/>
    <property type="evidence" value="ECO:0000353"/>
    <property type="project" value="TAIR"/>
</dbReference>
<dbReference type="GO" id="GO:0051301">
    <property type="term" value="P:cell division"/>
    <property type="evidence" value="ECO:0000270"/>
    <property type="project" value="TAIR"/>
</dbReference>
<dbReference type="GO" id="GO:0006952">
    <property type="term" value="P:defense response"/>
    <property type="evidence" value="ECO:0007669"/>
    <property type="project" value="UniProtKB-KW"/>
</dbReference>
<dbReference type="GO" id="GO:0009873">
    <property type="term" value="P:ethylene-activated signaling pathway"/>
    <property type="evidence" value="ECO:0007669"/>
    <property type="project" value="UniProtKB-KW"/>
</dbReference>
<dbReference type="GO" id="GO:0010087">
    <property type="term" value="P:phloem or xylem histogenesis"/>
    <property type="evidence" value="ECO:0000270"/>
    <property type="project" value="TAIR"/>
</dbReference>
<dbReference type="GO" id="GO:0009624">
    <property type="term" value="P:response to nematode"/>
    <property type="evidence" value="ECO:0000270"/>
    <property type="project" value="TAIR"/>
</dbReference>
<dbReference type="CDD" id="cd00018">
    <property type="entry name" value="AP2"/>
    <property type="match status" value="1"/>
</dbReference>
<dbReference type="FunFam" id="3.30.730.10:FF:000001">
    <property type="entry name" value="Ethylene-responsive transcription factor 2"/>
    <property type="match status" value="1"/>
</dbReference>
<dbReference type="Gene3D" id="3.30.730.10">
    <property type="entry name" value="AP2/ERF domain"/>
    <property type="match status" value="1"/>
</dbReference>
<dbReference type="InterPro" id="IPR001471">
    <property type="entry name" value="AP2/ERF_dom"/>
</dbReference>
<dbReference type="InterPro" id="IPR036955">
    <property type="entry name" value="AP2/ERF_dom_sf"/>
</dbReference>
<dbReference type="InterPro" id="IPR016177">
    <property type="entry name" value="DNA-bd_dom_sf"/>
</dbReference>
<dbReference type="InterPro" id="IPR044808">
    <property type="entry name" value="ERF_plant"/>
</dbReference>
<dbReference type="PANTHER" id="PTHR31190">
    <property type="entry name" value="DNA-BINDING DOMAIN"/>
    <property type="match status" value="1"/>
</dbReference>
<dbReference type="PANTHER" id="PTHR31190:SF389">
    <property type="entry name" value="ETHYLENE-RESPONSIVE TRANSCRIPTION FACTOR 1A"/>
    <property type="match status" value="1"/>
</dbReference>
<dbReference type="Pfam" id="PF00847">
    <property type="entry name" value="AP2"/>
    <property type="match status" value="1"/>
</dbReference>
<dbReference type="PRINTS" id="PR00367">
    <property type="entry name" value="ETHRSPELEMNT"/>
</dbReference>
<dbReference type="SMART" id="SM00380">
    <property type="entry name" value="AP2"/>
    <property type="match status" value="1"/>
</dbReference>
<dbReference type="SUPFAM" id="SSF54171">
    <property type="entry name" value="DNA-binding domain"/>
    <property type="match status" value="1"/>
</dbReference>
<dbReference type="PROSITE" id="PS51032">
    <property type="entry name" value="AP2_ERF"/>
    <property type="match status" value="1"/>
</dbReference>
<accession>O80337</accession>
<accession>Q93Z36</accession>
<accession>Q9SUK1</accession>
<protein>
    <recommendedName>
        <fullName>Ethylene-responsive transcription factor 1A</fullName>
        <shortName>AtERF1A</shortName>
    </recommendedName>
    <alternativeName>
        <fullName>Ethylene-responsive element-binding factor 1A</fullName>
        <shortName>EREBP-1A</shortName>
    </alternativeName>
</protein>
<evidence type="ECO:0000250" key="1"/>
<evidence type="ECO:0000255" key="2"/>
<evidence type="ECO:0000255" key="3">
    <source>
        <dbReference type="PROSITE-ProRule" id="PRU00366"/>
    </source>
</evidence>
<evidence type="ECO:0000256" key="4">
    <source>
        <dbReference type="SAM" id="MobiDB-lite"/>
    </source>
</evidence>
<evidence type="ECO:0000269" key="5">
    <source>
    </source>
</evidence>
<evidence type="ECO:0000269" key="6">
    <source>
    </source>
</evidence>
<evidence type="ECO:0000269" key="7">
    <source>
    </source>
</evidence>
<evidence type="ECO:0000305" key="8"/>
<evidence type="ECO:0007829" key="9">
    <source>
        <dbReference type="PDB" id="1GCC"/>
    </source>
</evidence>
<evidence type="ECO:0007829" key="10">
    <source>
        <dbReference type="PDB" id="3GCC"/>
    </source>
</evidence>
<feature type="chain" id="PRO_0000112542" description="Ethylene-responsive transcription factor 1A">
    <location>
        <begin position="1"/>
        <end position="268"/>
    </location>
</feature>
<feature type="DNA-binding region" description="AP2/ERF" evidence="3">
    <location>
        <begin position="147"/>
        <end position="205"/>
    </location>
</feature>
<feature type="region of interest" description="Disordered" evidence="4">
    <location>
        <begin position="215"/>
        <end position="244"/>
    </location>
</feature>
<feature type="short sequence motif" description="Nuclear localization signal" evidence="2">
    <location>
        <begin position="221"/>
        <end position="237"/>
    </location>
</feature>
<feature type="strand" evidence="9">
    <location>
        <begin position="151"/>
        <end position="154"/>
    </location>
</feature>
<feature type="turn" evidence="9">
    <location>
        <begin position="155"/>
        <end position="157"/>
    </location>
</feature>
<feature type="strand" evidence="9">
    <location>
        <begin position="158"/>
        <end position="165"/>
    </location>
</feature>
<feature type="turn" evidence="9">
    <location>
        <begin position="166"/>
        <end position="169"/>
    </location>
</feature>
<feature type="strand" evidence="9">
    <location>
        <begin position="170"/>
        <end position="180"/>
    </location>
</feature>
<feature type="helix" evidence="9">
    <location>
        <begin position="181"/>
        <end position="196"/>
    </location>
</feature>
<feature type="strand" evidence="10">
    <location>
        <begin position="203"/>
        <end position="206"/>
    </location>
</feature>
<reference key="1">
    <citation type="journal article" date="1998" name="Nature">
        <title>Analysis of 1.9 Mb of contiguous sequence from chromosome 4 of Arabidopsis thaliana.</title>
        <authorList>
            <person name="Bevan M."/>
            <person name="Bancroft I."/>
            <person name="Bent E."/>
            <person name="Love K."/>
            <person name="Goodman H.M."/>
            <person name="Dean C."/>
            <person name="Bergkamp R."/>
            <person name="Dirkse W."/>
            <person name="van Staveren M."/>
            <person name="Stiekema W."/>
            <person name="Drost L."/>
            <person name="Ridley P."/>
            <person name="Hudson S.-A."/>
            <person name="Patel K."/>
            <person name="Murphy G."/>
            <person name="Piffanelli P."/>
            <person name="Wedler H."/>
            <person name="Wedler E."/>
            <person name="Wambutt R."/>
            <person name="Weitzenegger T."/>
            <person name="Pohl T."/>
            <person name="Terryn N."/>
            <person name="Gielen J."/>
            <person name="Villarroel R."/>
            <person name="De Clercq R."/>
            <person name="van Montagu M."/>
            <person name="Lecharny A."/>
            <person name="Aubourg S."/>
            <person name="Gy I."/>
            <person name="Kreis M."/>
            <person name="Lao N."/>
            <person name="Kavanagh T."/>
            <person name="Hempel S."/>
            <person name="Kotter P."/>
            <person name="Entian K.-D."/>
            <person name="Rieger M."/>
            <person name="Schaefer M."/>
            <person name="Funk B."/>
            <person name="Mueller-Auer S."/>
            <person name="Silvey M."/>
            <person name="James R."/>
            <person name="Monfort A."/>
            <person name="Pons A."/>
            <person name="Puigdomenech P."/>
            <person name="Douka A."/>
            <person name="Voukelatou E."/>
            <person name="Milioni D."/>
            <person name="Hatzopoulos P."/>
            <person name="Piravandi E."/>
            <person name="Obermaier B."/>
            <person name="Hilbert H."/>
            <person name="Duesterhoeft A."/>
            <person name="Moores T."/>
            <person name="Jones J.D.G."/>
            <person name="Eneva T."/>
            <person name="Palme K."/>
            <person name="Benes V."/>
            <person name="Rechmann S."/>
            <person name="Ansorge W."/>
            <person name="Cooke R."/>
            <person name="Berger C."/>
            <person name="Delseny M."/>
            <person name="Voet M."/>
            <person name="Volckaert G."/>
            <person name="Mewes H.-W."/>
            <person name="Klosterman S."/>
            <person name="Schueller C."/>
            <person name="Chalwatzis N."/>
        </authorList>
    </citation>
    <scope>NUCLEOTIDE SEQUENCE [LARGE SCALE GENOMIC DNA]</scope>
    <source>
        <strain>cv. Columbia</strain>
    </source>
</reference>
<reference key="2">
    <citation type="journal article" date="1999" name="Nature">
        <title>Sequence and analysis of chromosome 4 of the plant Arabidopsis thaliana.</title>
        <authorList>
            <person name="Mayer K.F.X."/>
            <person name="Schueller C."/>
            <person name="Wambutt R."/>
            <person name="Murphy G."/>
            <person name="Volckaert G."/>
            <person name="Pohl T."/>
            <person name="Duesterhoeft A."/>
            <person name="Stiekema W."/>
            <person name="Entian K.-D."/>
            <person name="Terryn N."/>
            <person name="Harris B."/>
            <person name="Ansorge W."/>
            <person name="Brandt P."/>
            <person name="Grivell L.A."/>
            <person name="Rieger M."/>
            <person name="Weichselgartner M."/>
            <person name="de Simone V."/>
            <person name="Obermaier B."/>
            <person name="Mache R."/>
            <person name="Mueller M."/>
            <person name="Kreis M."/>
            <person name="Delseny M."/>
            <person name="Puigdomenech P."/>
            <person name="Watson M."/>
            <person name="Schmidtheini T."/>
            <person name="Reichert B."/>
            <person name="Portetelle D."/>
            <person name="Perez-Alonso M."/>
            <person name="Boutry M."/>
            <person name="Bancroft I."/>
            <person name="Vos P."/>
            <person name="Hoheisel J."/>
            <person name="Zimmermann W."/>
            <person name="Wedler H."/>
            <person name="Ridley P."/>
            <person name="Langham S.-A."/>
            <person name="McCullagh B."/>
            <person name="Bilham L."/>
            <person name="Robben J."/>
            <person name="van der Schueren J."/>
            <person name="Grymonprez B."/>
            <person name="Chuang Y.-J."/>
            <person name="Vandenbussche F."/>
            <person name="Braeken M."/>
            <person name="Weltjens I."/>
            <person name="Voet M."/>
            <person name="Bastiaens I."/>
            <person name="Aert R."/>
            <person name="Defoor E."/>
            <person name="Weitzenegger T."/>
            <person name="Bothe G."/>
            <person name="Ramsperger U."/>
            <person name="Hilbert H."/>
            <person name="Braun M."/>
            <person name="Holzer E."/>
            <person name="Brandt A."/>
            <person name="Peters S."/>
            <person name="van Staveren M."/>
            <person name="Dirkse W."/>
            <person name="Mooijman P."/>
            <person name="Klein Lankhorst R."/>
            <person name="Rose M."/>
            <person name="Hauf J."/>
            <person name="Koetter P."/>
            <person name="Berneiser S."/>
            <person name="Hempel S."/>
            <person name="Feldpausch M."/>
            <person name="Lamberth S."/>
            <person name="Van den Daele H."/>
            <person name="De Keyser A."/>
            <person name="Buysshaert C."/>
            <person name="Gielen J."/>
            <person name="Villarroel R."/>
            <person name="De Clercq R."/>
            <person name="van Montagu M."/>
            <person name="Rogers J."/>
            <person name="Cronin A."/>
            <person name="Quail M.A."/>
            <person name="Bray-Allen S."/>
            <person name="Clark L."/>
            <person name="Doggett J."/>
            <person name="Hall S."/>
            <person name="Kay M."/>
            <person name="Lennard N."/>
            <person name="McLay K."/>
            <person name="Mayes R."/>
            <person name="Pettett A."/>
            <person name="Rajandream M.A."/>
            <person name="Lyne M."/>
            <person name="Benes V."/>
            <person name="Rechmann S."/>
            <person name="Borkova D."/>
            <person name="Bloecker H."/>
            <person name="Scharfe M."/>
            <person name="Grimm M."/>
            <person name="Loehnert T.-H."/>
            <person name="Dose S."/>
            <person name="de Haan M."/>
            <person name="Maarse A.C."/>
            <person name="Schaefer M."/>
            <person name="Mueller-Auer S."/>
            <person name="Gabel C."/>
            <person name="Fuchs M."/>
            <person name="Fartmann B."/>
            <person name="Granderath K."/>
            <person name="Dauner D."/>
            <person name="Herzl A."/>
            <person name="Neumann S."/>
            <person name="Argiriou A."/>
            <person name="Vitale D."/>
            <person name="Liguori R."/>
            <person name="Piravandi E."/>
            <person name="Massenet O."/>
            <person name="Quigley F."/>
            <person name="Clabauld G."/>
            <person name="Muendlein A."/>
            <person name="Felber R."/>
            <person name="Schnabl S."/>
            <person name="Hiller R."/>
            <person name="Schmidt W."/>
            <person name="Lecharny A."/>
            <person name="Aubourg S."/>
            <person name="Chefdor F."/>
            <person name="Cooke R."/>
            <person name="Berger C."/>
            <person name="Monfort A."/>
            <person name="Casacuberta E."/>
            <person name="Gibbons T."/>
            <person name="Weber N."/>
            <person name="Vandenbol M."/>
            <person name="Bargues M."/>
            <person name="Terol J."/>
            <person name="Torres A."/>
            <person name="Perez-Perez A."/>
            <person name="Purnelle B."/>
            <person name="Bent E."/>
            <person name="Johnson S."/>
            <person name="Tacon D."/>
            <person name="Jesse T."/>
            <person name="Heijnen L."/>
            <person name="Schwarz S."/>
            <person name="Scholler P."/>
            <person name="Heber S."/>
            <person name="Francs P."/>
            <person name="Bielke C."/>
            <person name="Frishman D."/>
            <person name="Haase D."/>
            <person name="Lemcke K."/>
            <person name="Mewes H.-W."/>
            <person name="Stocker S."/>
            <person name="Zaccaria P."/>
            <person name="Bevan M."/>
            <person name="Wilson R.K."/>
            <person name="de la Bastide M."/>
            <person name="Habermann K."/>
            <person name="Parnell L."/>
            <person name="Dedhia N."/>
            <person name="Gnoj L."/>
            <person name="Schutz K."/>
            <person name="Huang E."/>
            <person name="Spiegel L."/>
            <person name="Sekhon M."/>
            <person name="Murray J."/>
            <person name="Sheet P."/>
            <person name="Cordes M."/>
            <person name="Abu-Threideh J."/>
            <person name="Stoneking T."/>
            <person name="Kalicki J."/>
            <person name="Graves T."/>
            <person name="Harmon G."/>
            <person name="Edwards J."/>
            <person name="Latreille P."/>
            <person name="Courtney L."/>
            <person name="Cloud J."/>
            <person name="Abbott A."/>
            <person name="Scott K."/>
            <person name="Johnson D."/>
            <person name="Minx P."/>
            <person name="Bentley D."/>
            <person name="Fulton B."/>
            <person name="Miller N."/>
            <person name="Greco T."/>
            <person name="Kemp K."/>
            <person name="Kramer J."/>
            <person name="Fulton L."/>
            <person name="Mardis E."/>
            <person name="Dante M."/>
            <person name="Pepin K."/>
            <person name="Hillier L.W."/>
            <person name="Nelson J."/>
            <person name="Spieth J."/>
            <person name="Ryan E."/>
            <person name="Andrews S."/>
            <person name="Geisel C."/>
            <person name="Layman D."/>
            <person name="Du H."/>
            <person name="Ali J."/>
            <person name="Berghoff A."/>
            <person name="Jones K."/>
            <person name="Drone K."/>
            <person name="Cotton M."/>
            <person name="Joshu C."/>
            <person name="Antonoiu B."/>
            <person name="Zidanic M."/>
            <person name="Strong C."/>
            <person name="Sun H."/>
            <person name="Lamar B."/>
            <person name="Yordan C."/>
            <person name="Ma P."/>
            <person name="Zhong J."/>
            <person name="Preston R."/>
            <person name="Vil D."/>
            <person name="Shekher M."/>
            <person name="Matero A."/>
            <person name="Shah R."/>
            <person name="Swaby I.K."/>
            <person name="O'Shaughnessy A."/>
            <person name="Rodriguez M."/>
            <person name="Hoffman J."/>
            <person name="Till S."/>
            <person name="Granat S."/>
            <person name="Shohdy N."/>
            <person name="Hasegawa A."/>
            <person name="Hameed A."/>
            <person name="Lodhi M."/>
            <person name="Johnson A."/>
            <person name="Chen E."/>
            <person name="Marra M.A."/>
            <person name="Martienssen R."/>
            <person name="McCombie W.R."/>
        </authorList>
    </citation>
    <scope>NUCLEOTIDE SEQUENCE [LARGE SCALE GENOMIC DNA]</scope>
    <source>
        <strain>cv. Columbia</strain>
    </source>
</reference>
<reference key="3">
    <citation type="journal article" date="2017" name="Plant J.">
        <title>Araport11: a complete reannotation of the Arabidopsis thaliana reference genome.</title>
        <authorList>
            <person name="Cheng C.Y."/>
            <person name="Krishnakumar V."/>
            <person name="Chan A.P."/>
            <person name="Thibaud-Nissen F."/>
            <person name="Schobel S."/>
            <person name="Town C.D."/>
        </authorList>
    </citation>
    <scope>GENOME REANNOTATION</scope>
    <source>
        <strain>cv. Columbia</strain>
    </source>
</reference>
<reference key="4">
    <citation type="journal article" date="2003" name="Science">
        <title>Empirical analysis of transcriptional activity in the Arabidopsis genome.</title>
        <authorList>
            <person name="Yamada K."/>
            <person name="Lim J."/>
            <person name="Dale J.M."/>
            <person name="Chen H."/>
            <person name="Shinn P."/>
            <person name="Palm C.J."/>
            <person name="Southwick A.M."/>
            <person name="Wu H.C."/>
            <person name="Kim C.J."/>
            <person name="Nguyen M."/>
            <person name="Pham P.K."/>
            <person name="Cheuk R.F."/>
            <person name="Karlin-Newmann G."/>
            <person name="Liu S.X."/>
            <person name="Lam B."/>
            <person name="Sakano H."/>
            <person name="Wu T."/>
            <person name="Yu G."/>
            <person name="Miranda M."/>
            <person name="Quach H.L."/>
            <person name="Tripp M."/>
            <person name="Chang C.H."/>
            <person name="Lee J.M."/>
            <person name="Toriumi M.J."/>
            <person name="Chan M.M."/>
            <person name="Tang C.C."/>
            <person name="Onodera C.S."/>
            <person name="Deng J.M."/>
            <person name="Akiyama K."/>
            <person name="Ansari Y."/>
            <person name="Arakawa T."/>
            <person name="Banh J."/>
            <person name="Banno F."/>
            <person name="Bowser L."/>
            <person name="Brooks S.Y."/>
            <person name="Carninci P."/>
            <person name="Chao Q."/>
            <person name="Choy N."/>
            <person name="Enju A."/>
            <person name="Goldsmith A.D."/>
            <person name="Gurjal M."/>
            <person name="Hansen N.F."/>
            <person name="Hayashizaki Y."/>
            <person name="Johnson-Hopson C."/>
            <person name="Hsuan V.W."/>
            <person name="Iida K."/>
            <person name="Karnes M."/>
            <person name="Khan S."/>
            <person name="Koesema E."/>
            <person name="Ishida J."/>
            <person name="Jiang P.X."/>
            <person name="Jones T."/>
            <person name="Kawai J."/>
            <person name="Kamiya A."/>
            <person name="Meyers C."/>
            <person name="Nakajima M."/>
            <person name="Narusaka M."/>
            <person name="Seki M."/>
            <person name="Sakurai T."/>
            <person name="Satou M."/>
            <person name="Tamse R."/>
            <person name="Vaysberg M."/>
            <person name="Wallender E.K."/>
            <person name="Wong C."/>
            <person name="Yamamura Y."/>
            <person name="Yuan S."/>
            <person name="Shinozaki K."/>
            <person name="Davis R.W."/>
            <person name="Theologis A."/>
            <person name="Ecker J.R."/>
        </authorList>
    </citation>
    <scope>NUCLEOTIDE SEQUENCE [LARGE SCALE MRNA]</scope>
    <source>
        <strain>cv. Columbia</strain>
    </source>
</reference>
<reference key="5">
    <citation type="journal article" date="2000" name="Plant Cell">
        <title>Arabidopsis ethylene responsive element binding factors act as transcriptional activators or repressors of GCC box mediated gene expression.</title>
        <authorList>
            <person name="Fujimoto S.Y."/>
            <person name="Ohta M."/>
            <person name="Usui A."/>
            <person name="Shinshi H."/>
            <person name="Ohme-Takagi M."/>
        </authorList>
    </citation>
    <scope>NUCLEOTIDE SEQUENCE [MRNA] OF 3-268</scope>
    <scope>FUNCTION</scope>
    <scope>INDUCTION</scope>
    <source>
        <strain>cv. C24</strain>
    </source>
</reference>
<reference key="6">
    <citation type="journal article" date="1998" name="J. Biol. Chem.">
        <title>Unique mode of GCC box recognition by the DNA-binding domain of ethylene-responsive element-binding factor (ERF domain) in plant.</title>
        <authorList>
            <person name="Hao D."/>
            <person name="Ohme-Takagi M."/>
            <person name="Sarai A."/>
        </authorList>
    </citation>
    <scope>FUNCTION</scope>
</reference>
<reference key="7">
    <citation type="journal article" date="2002" name="Plant Physiol.">
        <title>Identification of Arabidopsis ethylene-responsive element binding factors with distinct induction kinetics after pathogen infection.</title>
        <authorList>
            <person name="Onate-Sanchez L."/>
            <person name="Singh K.B."/>
        </authorList>
    </citation>
    <scope>FUNCTION</scope>
    <scope>TISSUE SPECIFICITY</scope>
    <scope>INDUCTION</scope>
</reference>
<reference key="8">
    <citation type="journal article" date="1998" name="EMBO J.">
        <title>A novel mode of DNA recognition by a beta-sheet revealed by the solution structure of the GCC-box binding domain in complex with DNA.</title>
        <authorList>
            <person name="Allen M.D."/>
            <person name="Yamasaki K."/>
            <person name="Ohme-Takagi M."/>
            <person name="Tateno M."/>
            <person name="Suzuki M."/>
        </authorList>
    </citation>
    <scope>STRUCTURE BY NMR OF 146-208</scope>
</reference>
<reference key="9">
    <citation type="journal article" date="2006" name="Plant Physiol.">
        <title>Genome-wide analysis of the ERF gene family in Arabidopsis and rice.</title>
        <authorList>
            <person name="Nakano T."/>
            <person name="Suzuki K."/>
            <person name="Fujimura T."/>
            <person name="Shinshi H."/>
        </authorList>
    </citation>
    <scope>GENE FAMILY</scope>
    <scope>NOMENCLATURE</scope>
</reference>
<organism>
    <name type="scientific">Arabidopsis thaliana</name>
    <name type="common">Mouse-ear cress</name>
    <dbReference type="NCBI Taxonomy" id="3702"/>
    <lineage>
        <taxon>Eukaryota</taxon>
        <taxon>Viridiplantae</taxon>
        <taxon>Streptophyta</taxon>
        <taxon>Embryophyta</taxon>
        <taxon>Tracheophyta</taxon>
        <taxon>Spermatophyta</taxon>
        <taxon>Magnoliopsida</taxon>
        <taxon>eudicotyledons</taxon>
        <taxon>Gunneridae</taxon>
        <taxon>Pentapetalae</taxon>
        <taxon>rosids</taxon>
        <taxon>malvids</taxon>
        <taxon>Brassicales</taxon>
        <taxon>Brassicaceae</taxon>
        <taxon>Camelineae</taxon>
        <taxon>Arabidopsis</taxon>
    </lineage>
</organism>
<comment type="function">
    <text evidence="5 6 7">Acts as a transcriptional activator. Binds to the GCC-box pathogenesis-related promoter element. Involved in the regulation of gene expression by stress factors and by components of stress signal transduction pathways.</text>
</comment>
<comment type="interaction">
    <interactant intactId="EBI-25521413">
        <id>O80337</id>
    </interactant>
    <interactant intactId="EBI-25521402">
        <id>Q9FFR5</id>
        <label>GLXI-LIKE</label>
    </interactant>
    <organismsDiffer>false</organismsDiffer>
    <experiments>3</experiments>
</comment>
<comment type="subcellular location">
    <subcellularLocation>
        <location evidence="8">Nucleus</location>
    </subcellularLocation>
</comment>
<comment type="tissue specificity">
    <text evidence="6">Ubiquitously expressed, mostly in flowers and rosettes after ethylene treatment.</text>
</comment>
<comment type="induction">
    <text evidence="5 6">Induced by Pseudomonas syringae tomato (both virulent and avirulent avrRpt2 strains), independently of PAD4. Also induced by methyl jasmonate (MeJA) independently of JAR1. Ethylene induction is completely dependent on a functional ETHYLENE-INSENSITIVE2 (EIN2), whereas induction by wounding does not need EIN2. Induction by salicylic acid (SA) seems to be independent of PAD4 and NPR1. Transcripts accumulate strongly in cycloheximide-treated plants, a protein synthesis inhibitor. Seems to not be influenced by exogenous abscisic acid (ABA), cold, heat, NaCl or drought stress.</text>
</comment>
<comment type="domain">
    <text evidence="1">The AP2/ERF domain binds specifically to the 5'-GCCGCC-3' motif. The affinity of this binding is higher if the seventh amino-acid of this domain is basic (By similarity).</text>
</comment>
<comment type="similarity">
    <text evidence="8">Belongs to the AP2/ERF transcription factor family. ERF subfamily.</text>
</comment>
<comment type="caution">
    <text evidence="8">Two different genes At3g23240 and At4g17500 were assigned the same gene name ERF1.</text>
</comment>
<comment type="caution">
    <text evidence="8">It is uncertain whether Met-1 or Met-3 is the initiator.</text>
</comment>
<comment type="sequence caution" evidence="8">
    <conflict type="erroneous initiation">
        <sequence resource="EMBL-CDS" id="BAA32418"/>
    </conflict>
</comment>
<comment type="sequence caution" evidence="8">
    <conflict type="frameshift">
        <sequence resource="EMBL-CDS" id="CAB45963"/>
    </conflict>
</comment>
<comment type="sequence caution" evidence="8">
    <conflict type="frameshift">
        <sequence resource="EMBL-CDS" id="CAB78753"/>
    </conflict>
</comment>
<proteinExistence type="evidence at protein level"/>
<gene>
    <name type="primary">ERF1A</name>
    <name type="synonym">ERF-1</name>
    <name type="synonym">ERF100</name>
    <name type="ordered locus">At4g17500</name>
    <name type="ORF">dl4785w</name>
    <name type="ORF">FCAALL.123</name>
</gene>
<name>EF100_ARATH</name>